<organism>
    <name type="scientific">Anaeromyxobacter dehalogenans (strain 2CP-C)</name>
    <dbReference type="NCBI Taxonomy" id="290397"/>
    <lineage>
        <taxon>Bacteria</taxon>
        <taxon>Pseudomonadati</taxon>
        <taxon>Myxococcota</taxon>
        <taxon>Myxococcia</taxon>
        <taxon>Myxococcales</taxon>
        <taxon>Cystobacterineae</taxon>
        <taxon>Anaeromyxobacteraceae</taxon>
        <taxon>Anaeromyxobacter</taxon>
    </lineage>
</organism>
<sequence length="262" mass="28650">MSLPATAPAAAPVPKMEARHLSVRYGEKLAVKDISLALPERQVTALIGPSGCGKSTFLRALNRMNDLIPGARAEGEILLDGESVFDRHIDAVELRRRVGMVFQKSNPFPKSIFENVAYGLRVSGLKDRAALAERVERSLVNAALWDEVKDRLGESALGLSGGQQQRLCIARALAVEPEVVLMDEPASALDPIATAKIEDLIHHLKARYTIAIVTHNMQQAARVSDQTAFFYMGDLVEVGPTEQIFTNPSEQRTEDYVTGKFG</sequence>
<comment type="function">
    <text evidence="1">Part of the ABC transporter complex PstSACB involved in phosphate import. Responsible for energy coupling to the transport system.</text>
</comment>
<comment type="catalytic activity">
    <reaction evidence="1">
        <text>phosphate(out) + ATP + H2O = ADP + 2 phosphate(in) + H(+)</text>
        <dbReference type="Rhea" id="RHEA:24440"/>
        <dbReference type="ChEBI" id="CHEBI:15377"/>
        <dbReference type="ChEBI" id="CHEBI:15378"/>
        <dbReference type="ChEBI" id="CHEBI:30616"/>
        <dbReference type="ChEBI" id="CHEBI:43474"/>
        <dbReference type="ChEBI" id="CHEBI:456216"/>
        <dbReference type="EC" id="7.3.2.1"/>
    </reaction>
</comment>
<comment type="subunit">
    <text evidence="1">The complex is composed of two ATP-binding proteins (PstB), two transmembrane proteins (PstC and PstA) and a solute-binding protein (PstS).</text>
</comment>
<comment type="subcellular location">
    <subcellularLocation>
        <location evidence="1">Cell inner membrane</location>
        <topology evidence="1">Peripheral membrane protein</topology>
    </subcellularLocation>
</comment>
<comment type="similarity">
    <text evidence="1">Belongs to the ABC transporter superfamily. Phosphate importer (TC 3.A.1.7) family.</text>
</comment>
<accession>Q2IGQ6</accession>
<proteinExistence type="inferred from homology"/>
<protein>
    <recommendedName>
        <fullName evidence="1">Phosphate import ATP-binding protein PstB</fullName>
        <ecNumber evidence="1">7.3.2.1</ecNumber>
    </recommendedName>
    <alternativeName>
        <fullName evidence="1">ABC phosphate transporter</fullName>
    </alternativeName>
    <alternativeName>
        <fullName evidence="1">Phosphate-transporting ATPase</fullName>
    </alternativeName>
</protein>
<keyword id="KW-0067">ATP-binding</keyword>
<keyword id="KW-0997">Cell inner membrane</keyword>
<keyword id="KW-1003">Cell membrane</keyword>
<keyword id="KW-0472">Membrane</keyword>
<keyword id="KW-0547">Nucleotide-binding</keyword>
<keyword id="KW-0592">Phosphate transport</keyword>
<keyword id="KW-1185">Reference proteome</keyword>
<keyword id="KW-1278">Translocase</keyword>
<keyword id="KW-0813">Transport</keyword>
<reference key="1">
    <citation type="submission" date="2006-01" db="EMBL/GenBank/DDBJ databases">
        <title>Complete sequence of Anaeromyxobacter dehalogenans 2CP-C.</title>
        <authorList>
            <person name="Copeland A."/>
            <person name="Lucas S."/>
            <person name="Lapidus A."/>
            <person name="Barry K."/>
            <person name="Detter J.C."/>
            <person name="Glavina T."/>
            <person name="Hammon N."/>
            <person name="Israni S."/>
            <person name="Pitluck S."/>
            <person name="Brettin T."/>
            <person name="Bruce D."/>
            <person name="Han C."/>
            <person name="Tapia R."/>
            <person name="Gilna P."/>
            <person name="Kiss H."/>
            <person name="Schmutz J."/>
            <person name="Larimer F."/>
            <person name="Land M."/>
            <person name="Kyrpides N."/>
            <person name="Anderson I."/>
            <person name="Sanford R.A."/>
            <person name="Ritalahti K.M."/>
            <person name="Thomas H.S."/>
            <person name="Kirby J.R."/>
            <person name="Zhulin I.B."/>
            <person name="Loeffler F.E."/>
            <person name="Richardson P."/>
        </authorList>
    </citation>
    <scope>NUCLEOTIDE SEQUENCE [LARGE SCALE GENOMIC DNA]</scope>
    <source>
        <strain>2CP-C</strain>
    </source>
</reference>
<gene>
    <name evidence="1" type="primary">pstB</name>
    <name type="ordered locus">Adeh_4003</name>
</gene>
<dbReference type="EC" id="7.3.2.1" evidence="1"/>
<dbReference type="EMBL" id="CP000251">
    <property type="protein sequence ID" value="ABC83767.1"/>
    <property type="molecule type" value="Genomic_DNA"/>
</dbReference>
<dbReference type="SMR" id="Q2IGQ6"/>
<dbReference type="STRING" id="290397.Adeh_4003"/>
<dbReference type="KEGG" id="ade:Adeh_4003"/>
<dbReference type="eggNOG" id="COG1117">
    <property type="taxonomic scope" value="Bacteria"/>
</dbReference>
<dbReference type="HOGENOM" id="CLU_000604_1_22_7"/>
<dbReference type="OrthoDB" id="9809450at2"/>
<dbReference type="Proteomes" id="UP000001935">
    <property type="component" value="Chromosome"/>
</dbReference>
<dbReference type="GO" id="GO:0005886">
    <property type="term" value="C:plasma membrane"/>
    <property type="evidence" value="ECO:0007669"/>
    <property type="project" value="UniProtKB-SubCell"/>
</dbReference>
<dbReference type="GO" id="GO:0005524">
    <property type="term" value="F:ATP binding"/>
    <property type="evidence" value="ECO:0007669"/>
    <property type="project" value="UniProtKB-KW"/>
</dbReference>
<dbReference type="GO" id="GO:0016887">
    <property type="term" value="F:ATP hydrolysis activity"/>
    <property type="evidence" value="ECO:0007669"/>
    <property type="project" value="InterPro"/>
</dbReference>
<dbReference type="GO" id="GO:0015415">
    <property type="term" value="F:ATPase-coupled phosphate ion transmembrane transporter activity"/>
    <property type="evidence" value="ECO:0007669"/>
    <property type="project" value="UniProtKB-EC"/>
</dbReference>
<dbReference type="GO" id="GO:0035435">
    <property type="term" value="P:phosphate ion transmembrane transport"/>
    <property type="evidence" value="ECO:0007669"/>
    <property type="project" value="InterPro"/>
</dbReference>
<dbReference type="CDD" id="cd03260">
    <property type="entry name" value="ABC_PstB_phosphate_transporter"/>
    <property type="match status" value="1"/>
</dbReference>
<dbReference type="Gene3D" id="3.40.50.300">
    <property type="entry name" value="P-loop containing nucleotide triphosphate hydrolases"/>
    <property type="match status" value="1"/>
</dbReference>
<dbReference type="InterPro" id="IPR003593">
    <property type="entry name" value="AAA+_ATPase"/>
</dbReference>
<dbReference type="InterPro" id="IPR003439">
    <property type="entry name" value="ABC_transporter-like_ATP-bd"/>
</dbReference>
<dbReference type="InterPro" id="IPR017871">
    <property type="entry name" value="ABC_transporter-like_CS"/>
</dbReference>
<dbReference type="InterPro" id="IPR027417">
    <property type="entry name" value="P-loop_NTPase"/>
</dbReference>
<dbReference type="InterPro" id="IPR005670">
    <property type="entry name" value="PstB-like"/>
</dbReference>
<dbReference type="NCBIfam" id="TIGR00972">
    <property type="entry name" value="3a0107s01c2"/>
    <property type="match status" value="1"/>
</dbReference>
<dbReference type="PANTHER" id="PTHR43423">
    <property type="entry name" value="ABC TRANSPORTER I FAMILY MEMBER 17"/>
    <property type="match status" value="1"/>
</dbReference>
<dbReference type="PANTHER" id="PTHR43423:SF1">
    <property type="entry name" value="ABC TRANSPORTER I FAMILY MEMBER 17"/>
    <property type="match status" value="1"/>
</dbReference>
<dbReference type="Pfam" id="PF00005">
    <property type="entry name" value="ABC_tran"/>
    <property type="match status" value="1"/>
</dbReference>
<dbReference type="SMART" id="SM00382">
    <property type="entry name" value="AAA"/>
    <property type="match status" value="1"/>
</dbReference>
<dbReference type="SUPFAM" id="SSF52540">
    <property type="entry name" value="P-loop containing nucleoside triphosphate hydrolases"/>
    <property type="match status" value="1"/>
</dbReference>
<dbReference type="PROSITE" id="PS00211">
    <property type="entry name" value="ABC_TRANSPORTER_1"/>
    <property type="match status" value="1"/>
</dbReference>
<dbReference type="PROSITE" id="PS50893">
    <property type="entry name" value="ABC_TRANSPORTER_2"/>
    <property type="match status" value="1"/>
</dbReference>
<dbReference type="PROSITE" id="PS51238">
    <property type="entry name" value="PSTB"/>
    <property type="match status" value="1"/>
</dbReference>
<feature type="chain" id="PRO_0000272421" description="Phosphate import ATP-binding protein PstB">
    <location>
        <begin position="1"/>
        <end position="262"/>
    </location>
</feature>
<feature type="domain" description="ABC transporter" evidence="1">
    <location>
        <begin position="16"/>
        <end position="257"/>
    </location>
</feature>
<feature type="binding site" evidence="1">
    <location>
        <begin position="48"/>
        <end position="55"/>
    </location>
    <ligand>
        <name>ATP</name>
        <dbReference type="ChEBI" id="CHEBI:30616"/>
    </ligand>
</feature>
<name>PSTB_ANADE</name>
<evidence type="ECO:0000255" key="1">
    <source>
        <dbReference type="HAMAP-Rule" id="MF_01702"/>
    </source>
</evidence>